<reference key="1">
    <citation type="journal article" date="1992" name="Virology">
        <title>Channel catfish virus: a new type of herpesvirus.</title>
        <authorList>
            <person name="Davison A.J."/>
        </authorList>
    </citation>
    <scope>NUCLEOTIDE SEQUENCE [LARGE SCALE GENOMIC DNA]</scope>
</reference>
<dbReference type="EMBL" id="M75136">
    <property type="protein sequence ID" value="AAA88170.1"/>
    <property type="molecule type" value="Genomic_DNA"/>
</dbReference>
<dbReference type="PIR" id="C36793">
    <property type="entry name" value="C36793"/>
</dbReference>
<dbReference type="RefSeq" id="NP_041158.1">
    <property type="nucleotide sequence ID" value="NC_001493.2"/>
</dbReference>
<dbReference type="SMR" id="Q00154"/>
<dbReference type="GeneID" id="1488443"/>
<dbReference type="KEGG" id="vg:1488443"/>
<dbReference type="Proteomes" id="UP000007643">
    <property type="component" value="Segment"/>
</dbReference>
<accession>Q00154</accession>
<feature type="chain" id="PRO_0000222144" description="Uncharacterized protein ORF66">
    <location>
        <begin position="1"/>
        <end position="411"/>
    </location>
</feature>
<feature type="region of interest" description="Disordered" evidence="1">
    <location>
        <begin position="32"/>
        <end position="108"/>
    </location>
</feature>
<organism>
    <name type="scientific">Ictalurid herpesvirus 1 (strain Auburn)</name>
    <name type="common">IcHV-1</name>
    <name type="synonym">Channel catfish herpesvirus</name>
    <dbReference type="NCBI Taxonomy" id="766178"/>
    <lineage>
        <taxon>Viruses</taxon>
        <taxon>Duplodnaviria</taxon>
        <taxon>Heunggongvirae</taxon>
        <taxon>Peploviricota</taxon>
        <taxon>Herviviricetes</taxon>
        <taxon>Herpesvirales</taxon>
        <taxon>Alloherpesviridae</taxon>
        <taxon>Ictavirus</taxon>
        <taxon>Ictavirus ictaluridallo1</taxon>
        <taxon>Ictalurid herpesvirus 1</taxon>
    </lineage>
</organism>
<evidence type="ECO:0000256" key="1">
    <source>
        <dbReference type="SAM" id="MobiDB-lite"/>
    </source>
</evidence>
<keyword id="KW-1185">Reference proteome</keyword>
<proteinExistence type="predicted"/>
<sequence length="411" mass="47351">MDSITLNAFDVSSAYTGEFVYDLDLNLFNKMLGGDPAPKPTTQPEERPTGRPIPVPRRRVRPRPAEDQLEEPLEELVKDPIGGPRGEQVEEPVEEPVEPEHPRRIPIPRNRSTRHRFLSADSSPPSHDGAVFDFRDRPTVFQKRGRPVRDMGPVRVSYDISTDVDRLMHNLQSMVKESRAVKVSEKDVDSCHEACERKYVGALMTVSSALRTLMVMVPDIKRIDHPQIKLLVNASRNDFVNVCLTESQKQRSLGVTNVYIDGTDQPLTVNLGLDRNDRLKSTLYKMAQLWKYETKMWERFSAAAKGGYDMKDLIEARRLRVERPFEQTSQLVDYLLDSIDDLTITGVERAKLSDWFTLISRYLKLDHQLLVNELTEGYILKEENKVLKERLDSLQVQVRKLQNRDLLDKWK</sequence>
<organismHost>
    <name type="scientific">Ictaluridae</name>
    <name type="common">bullhead catfishes</name>
    <dbReference type="NCBI Taxonomy" id="7996"/>
</organismHost>
<name>VG66_ICHVA</name>
<protein>
    <recommendedName>
        <fullName>Uncharacterized protein ORF66</fullName>
    </recommendedName>
</protein>
<gene>
    <name type="primary">ORF66</name>
</gene>